<dbReference type="EC" id="6.3.2.6" evidence="1"/>
<dbReference type="EMBL" id="CP000088">
    <property type="protein sequence ID" value="AAZ57048.1"/>
    <property type="molecule type" value="Genomic_DNA"/>
</dbReference>
<dbReference type="RefSeq" id="WP_011293432.1">
    <property type="nucleotide sequence ID" value="NC_007333.1"/>
</dbReference>
<dbReference type="SMR" id="Q47KH4"/>
<dbReference type="STRING" id="269800.Tfu_3015"/>
<dbReference type="KEGG" id="tfu:Tfu_3015"/>
<dbReference type="eggNOG" id="COG0152">
    <property type="taxonomic scope" value="Bacteria"/>
</dbReference>
<dbReference type="HOGENOM" id="CLU_045637_0_0_11"/>
<dbReference type="OrthoDB" id="9801549at2"/>
<dbReference type="UniPathway" id="UPA00074">
    <property type="reaction ID" value="UER00131"/>
</dbReference>
<dbReference type="GO" id="GO:0005737">
    <property type="term" value="C:cytoplasm"/>
    <property type="evidence" value="ECO:0007669"/>
    <property type="project" value="TreeGrafter"/>
</dbReference>
<dbReference type="GO" id="GO:0005524">
    <property type="term" value="F:ATP binding"/>
    <property type="evidence" value="ECO:0007669"/>
    <property type="project" value="UniProtKB-KW"/>
</dbReference>
<dbReference type="GO" id="GO:0004639">
    <property type="term" value="F:phosphoribosylaminoimidazolesuccinocarboxamide synthase activity"/>
    <property type="evidence" value="ECO:0007669"/>
    <property type="project" value="UniProtKB-UniRule"/>
</dbReference>
<dbReference type="GO" id="GO:0006189">
    <property type="term" value="P:'de novo' IMP biosynthetic process"/>
    <property type="evidence" value="ECO:0007669"/>
    <property type="project" value="UniProtKB-UniRule"/>
</dbReference>
<dbReference type="CDD" id="cd01414">
    <property type="entry name" value="SAICAR_synt_Sc"/>
    <property type="match status" value="1"/>
</dbReference>
<dbReference type="FunFam" id="3.30.200.20:FF:000199">
    <property type="entry name" value="Phosphoribosylaminoimidazole-succinocarboxamide synthase"/>
    <property type="match status" value="1"/>
</dbReference>
<dbReference type="FunFam" id="3.30.470.20:FF:000015">
    <property type="entry name" value="Phosphoribosylaminoimidazole-succinocarboxamide synthase"/>
    <property type="match status" value="1"/>
</dbReference>
<dbReference type="Gene3D" id="3.30.470.20">
    <property type="entry name" value="ATP-grasp fold, B domain"/>
    <property type="match status" value="1"/>
</dbReference>
<dbReference type="Gene3D" id="3.30.200.20">
    <property type="entry name" value="Phosphorylase Kinase, domain 1"/>
    <property type="match status" value="1"/>
</dbReference>
<dbReference type="HAMAP" id="MF_00137">
    <property type="entry name" value="SAICAR_synth"/>
    <property type="match status" value="1"/>
</dbReference>
<dbReference type="InterPro" id="IPR028923">
    <property type="entry name" value="SAICAR_synt/ADE2_N"/>
</dbReference>
<dbReference type="InterPro" id="IPR001636">
    <property type="entry name" value="SAICAR_synth"/>
</dbReference>
<dbReference type="InterPro" id="IPR018236">
    <property type="entry name" value="SAICAR_synthetase_CS"/>
</dbReference>
<dbReference type="NCBIfam" id="NF010568">
    <property type="entry name" value="PRK13961.1"/>
    <property type="match status" value="1"/>
</dbReference>
<dbReference type="NCBIfam" id="TIGR00081">
    <property type="entry name" value="purC"/>
    <property type="match status" value="1"/>
</dbReference>
<dbReference type="PANTHER" id="PTHR43700">
    <property type="entry name" value="PHOSPHORIBOSYLAMINOIMIDAZOLE-SUCCINOCARBOXAMIDE SYNTHASE"/>
    <property type="match status" value="1"/>
</dbReference>
<dbReference type="PANTHER" id="PTHR43700:SF1">
    <property type="entry name" value="PHOSPHORIBOSYLAMINOIMIDAZOLE-SUCCINOCARBOXAMIDE SYNTHASE"/>
    <property type="match status" value="1"/>
</dbReference>
<dbReference type="Pfam" id="PF01259">
    <property type="entry name" value="SAICAR_synt"/>
    <property type="match status" value="1"/>
</dbReference>
<dbReference type="SUPFAM" id="SSF56104">
    <property type="entry name" value="SAICAR synthase-like"/>
    <property type="match status" value="1"/>
</dbReference>
<dbReference type="PROSITE" id="PS01057">
    <property type="entry name" value="SAICAR_SYNTHETASE_1"/>
    <property type="match status" value="1"/>
</dbReference>
<dbReference type="PROSITE" id="PS01058">
    <property type="entry name" value="SAICAR_SYNTHETASE_2"/>
    <property type="match status" value="1"/>
</dbReference>
<reference key="1">
    <citation type="journal article" date="2007" name="J. Bacteriol.">
        <title>Genome sequence and analysis of the soil cellulolytic actinomycete Thermobifida fusca YX.</title>
        <authorList>
            <person name="Lykidis A."/>
            <person name="Mavromatis K."/>
            <person name="Ivanova N."/>
            <person name="Anderson I."/>
            <person name="Land M."/>
            <person name="DiBartolo G."/>
            <person name="Martinez M."/>
            <person name="Lapidus A."/>
            <person name="Lucas S."/>
            <person name="Copeland A."/>
            <person name="Richardson P."/>
            <person name="Wilson D.B."/>
            <person name="Kyrpides N."/>
        </authorList>
    </citation>
    <scope>NUCLEOTIDE SEQUENCE [LARGE SCALE GENOMIC DNA]</scope>
    <source>
        <strain>YX</strain>
    </source>
</reference>
<sequence length="307" mass="34044">MSGFVDKPVPVEVPGLTHLHTGKVRDLYATESGELVMVASDRVSAFDWVLPTEIPDKGRLLTQLSLWWFDQLSDIIDNHVISDTPPPGAPDDWAGRTLVCRRLDMVPVECVARGYLTGSGLAEYTATGAVCGVRLPEGLVDGSRLDPPIFTPATKAEVGEHDENVSLETVAERHGPALAERLREVTLALYERGREIAEERGILLADTKFEFGWDSDGSLVLADEVLTPDSSRFWPKEEWRPGRPQPSFDKQIIRDWLSSAESGWDRTSETPPPPLPDTVVEHTRARYIEVFERLTGQTADFVGISRS</sequence>
<feature type="chain" id="PRO_1000018805" description="Phosphoribosylaminoimidazole-succinocarboxamide synthase">
    <location>
        <begin position="1"/>
        <end position="307"/>
    </location>
</feature>
<comment type="catalytic activity">
    <reaction evidence="1">
        <text>5-amino-1-(5-phospho-D-ribosyl)imidazole-4-carboxylate + L-aspartate + ATP = (2S)-2-[5-amino-1-(5-phospho-beta-D-ribosyl)imidazole-4-carboxamido]succinate + ADP + phosphate + 2 H(+)</text>
        <dbReference type="Rhea" id="RHEA:22628"/>
        <dbReference type="ChEBI" id="CHEBI:15378"/>
        <dbReference type="ChEBI" id="CHEBI:29991"/>
        <dbReference type="ChEBI" id="CHEBI:30616"/>
        <dbReference type="ChEBI" id="CHEBI:43474"/>
        <dbReference type="ChEBI" id="CHEBI:58443"/>
        <dbReference type="ChEBI" id="CHEBI:77657"/>
        <dbReference type="ChEBI" id="CHEBI:456216"/>
        <dbReference type="EC" id="6.3.2.6"/>
    </reaction>
</comment>
<comment type="pathway">
    <text evidence="1">Purine metabolism; IMP biosynthesis via de novo pathway; 5-amino-1-(5-phospho-D-ribosyl)imidazole-4-carboxamide from 5-amino-1-(5-phospho-D-ribosyl)imidazole-4-carboxylate: step 1/2.</text>
</comment>
<comment type="similarity">
    <text evidence="1">Belongs to the SAICAR synthetase family.</text>
</comment>
<proteinExistence type="inferred from homology"/>
<gene>
    <name evidence="1" type="primary">purC</name>
    <name type="ordered locus">Tfu_3015</name>
</gene>
<evidence type="ECO:0000255" key="1">
    <source>
        <dbReference type="HAMAP-Rule" id="MF_00137"/>
    </source>
</evidence>
<organism>
    <name type="scientific">Thermobifida fusca (strain YX)</name>
    <dbReference type="NCBI Taxonomy" id="269800"/>
    <lineage>
        <taxon>Bacteria</taxon>
        <taxon>Bacillati</taxon>
        <taxon>Actinomycetota</taxon>
        <taxon>Actinomycetes</taxon>
        <taxon>Streptosporangiales</taxon>
        <taxon>Nocardiopsidaceae</taxon>
        <taxon>Thermobifida</taxon>
    </lineage>
</organism>
<name>PUR7_THEFY</name>
<protein>
    <recommendedName>
        <fullName evidence="1">Phosphoribosylaminoimidazole-succinocarboxamide synthase</fullName>
        <ecNumber evidence="1">6.3.2.6</ecNumber>
    </recommendedName>
    <alternativeName>
        <fullName evidence="1">SAICAR synthetase</fullName>
    </alternativeName>
</protein>
<keyword id="KW-0067">ATP-binding</keyword>
<keyword id="KW-0436">Ligase</keyword>
<keyword id="KW-0547">Nucleotide-binding</keyword>
<keyword id="KW-0658">Purine biosynthesis</keyword>
<accession>Q47KH4</accession>